<accession>P42167</accession>
<accession>A2T926</accession>
<accession>Q14861</accession>
<reference key="1">
    <citation type="journal article" date="1994" name="Proc. Natl. Acad. Sci. U.S.A.">
        <title>Three distinct human thymopoietins are derived from alternatively spliced mRNAs.</title>
        <authorList>
            <person name="Harris C.A."/>
            <person name="Andryuk P.J."/>
            <person name="Cline S.W."/>
            <person name="Chan H.K."/>
            <person name="Natarajan A."/>
            <person name="Siekierka J.J."/>
            <person name="Goldstein G."/>
        </authorList>
    </citation>
    <scope>NUCLEOTIDE SEQUENCE [MRNA] (ISOFORMS ALPHA; BETA AND GAMMA)</scope>
    <source>
        <tissue>Thymus</tissue>
    </source>
</reference>
<reference key="2">
    <citation type="journal article" date="2008" name="Eur. J. Cell Biol.">
        <title>LAP2zeta binds BAF and suppresses LAP2beta-mediated transcriptional repression.</title>
        <authorList>
            <person name="Shaklai S."/>
            <person name="Somech R."/>
            <person name="Gal-Yam E.N."/>
            <person name="Deshet-Unger N."/>
            <person name="Moshitch-Moshkovitz S."/>
            <person name="Hirschberg K."/>
            <person name="Amariglio N."/>
            <person name="Simon A.J."/>
            <person name="Rechavi G."/>
        </authorList>
    </citation>
    <scope>NUCLEOTIDE SEQUENCE [MRNA] (ISOFORM ZETA)</scope>
    <scope>SUBCELLULAR LOCATION (ISOFORM ZETA)</scope>
</reference>
<reference key="3">
    <citation type="submission" date="1998-06" db="EMBL/GenBank/DDBJ databases">
        <authorList>
            <person name="Yu W."/>
            <person name="Gibbs R.A."/>
        </authorList>
    </citation>
    <scope>NUCLEOTIDE SEQUENCE [LARGE SCALE MRNA] (ISOFORM GAMMA)</scope>
    <source>
        <tissue>Brain</tissue>
    </source>
</reference>
<reference key="4">
    <citation type="journal article" date="2006" name="Nature">
        <title>The finished DNA sequence of human chromosome 12.</title>
        <authorList>
            <person name="Scherer S.E."/>
            <person name="Muzny D.M."/>
            <person name="Buhay C.J."/>
            <person name="Chen R."/>
            <person name="Cree A."/>
            <person name="Ding Y."/>
            <person name="Dugan-Rocha S."/>
            <person name="Gill R."/>
            <person name="Gunaratne P."/>
            <person name="Harris R.A."/>
            <person name="Hawes A.C."/>
            <person name="Hernandez J."/>
            <person name="Hodgson A.V."/>
            <person name="Hume J."/>
            <person name="Jackson A."/>
            <person name="Khan Z.M."/>
            <person name="Kovar-Smith C."/>
            <person name="Lewis L.R."/>
            <person name="Lozado R.J."/>
            <person name="Metzker M.L."/>
            <person name="Milosavljevic A."/>
            <person name="Miner G.R."/>
            <person name="Montgomery K.T."/>
            <person name="Morgan M.B."/>
            <person name="Nazareth L.V."/>
            <person name="Scott G."/>
            <person name="Sodergren E."/>
            <person name="Song X.-Z."/>
            <person name="Steffen D."/>
            <person name="Lovering R.C."/>
            <person name="Wheeler D.A."/>
            <person name="Worley K.C."/>
            <person name="Yuan Y."/>
            <person name="Zhang Z."/>
            <person name="Adams C.Q."/>
            <person name="Ansari-Lari M.A."/>
            <person name="Ayele M."/>
            <person name="Brown M.J."/>
            <person name="Chen G."/>
            <person name="Chen Z."/>
            <person name="Clerc-Blankenburg K.P."/>
            <person name="Davis C."/>
            <person name="Delgado O."/>
            <person name="Dinh H.H."/>
            <person name="Draper H."/>
            <person name="Gonzalez-Garay M.L."/>
            <person name="Havlak P."/>
            <person name="Jackson L.R."/>
            <person name="Jacob L.S."/>
            <person name="Kelly S.H."/>
            <person name="Li L."/>
            <person name="Li Z."/>
            <person name="Liu J."/>
            <person name="Liu W."/>
            <person name="Lu J."/>
            <person name="Maheshwari M."/>
            <person name="Nguyen B.-V."/>
            <person name="Okwuonu G.O."/>
            <person name="Pasternak S."/>
            <person name="Perez L.M."/>
            <person name="Plopper F.J.H."/>
            <person name="Santibanez J."/>
            <person name="Shen H."/>
            <person name="Tabor P.E."/>
            <person name="Verduzco D."/>
            <person name="Waldron L."/>
            <person name="Wang Q."/>
            <person name="Williams G.A."/>
            <person name="Zhang J."/>
            <person name="Zhou J."/>
            <person name="Allen C.C."/>
            <person name="Amin A.G."/>
            <person name="Anyalebechi V."/>
            <person name="Bailey M."/>
            <person name="Barbaria J.A."/>
            <person name="Bimage K.E."/>
            <person name="Bryant N.P."/>
            <person name="Burch P.E."/>
            <person name="Burkett C.E."/>
            <person name="Burrell K.L."/>
            <person name="Calderon E."/>
            <person name="Cardenas V."/>
            <person name="Carter K."/>
            <person name="Casias K."/>
            <person name="Cavazos I."/>
            <person name="Cavazos S.R."/>
            <person name="Ceasar H."/>
            <person name="Chacko J."/>
            <person name="Chan S.N."/>
            <person name="Chavez D."/>
            <person name="Christopoulos C."/>
            <person name="Chu J."/>
            <person name="Cockrell R."/>
            <person name="Cox C.D."/>
            <person name="Dang M."/>
            <person name="Dathorne S.R."/>
            <person name="David R."/>
            <person name="Davis C.M."/>
            <person name="Davy-Carroll L."/>
            <person name="Deshazo D.R."/>
            <person name="Donlin J.E."/>
            <person name="D'Souza L."/>
            <person name="Eaves K.A."/>
            <person name="Egan A."/>
            <person name="Emery-Cohen A.J."/>
            <person name="Escotto M."/>
            <person name="Flagg N."/>
            <person name="Forbes L.D."/>
            <person name="Gabisi A.M."/>
            <person name="Garza M."/>
            <person name="Hamilton C."/>
            <person name="Henderson N."/>
            <person name="Hernandez O."/>
            <person name="Hines S."/>
            <person name="Hogues M.E."/>
            <person name="Huang M."/>
            <person name="Idlebird D.G."/>
            <person name="Johnson R."/>
            <person name="Jolivet A."/>
            <person name="Jones S."/>
            <person name="Kagan R."/>
            <person name="King L.M."/>
            <person name="Leal B."/>
            <person name="Lebow H."/>
            <person name="Lee S."/>
            <person name="LeVan J.M."/>
            <person name="Lewis L.C."/>
            <person name="London P."/>
            <person name="Lorensuhewa L.M."/>
            <person name="Loulseged H."/>
            <person name="Lovett D.A."/>
            <person name="Lucier A."/>
            <person name="Lucier R.L."/>
            <person name="Ma J."/>
            <person name="Madu R.C."/>
            <person name="Mapua P."/>
            <person name="Martindale A.D."/>
            <person name="Martinez E."/>
            <person name="Massey E."/>
            <person name="Mawhiney S."/>
            <person name="Meador M.G."/>
            <person name="Mendez S."/>
            <person name="Mercado C."/>
            <person name="Mercado I.C."/>
            <person name="Merritt C.E."/>
            <person name="Miner Z.L."/>
            <person name="Minja E."/>
            <person name="Mitchell T."/>
            <person name="Mohabbat F."/>
            <person name="Mohabbat K."/>
            <person name="Montgomery B."/>
            <person name="Moore N."/>
            <person name="Morris S."/>
            <person name="Munidasa M."/>
            <person name="Ngo R.N."/>
            <person name="Nguyen N.B."/>
            <person name="Nickerson E."/>
            <person name="Nwaokelemeh O.O."/>
            <person name="Nwokenkwo S."/>
            <person name="Obregon M."/>
            <person name="Oguh M."/>
            <person name="Oragunye N."/>
            <person name="Oviedo R.J."/>
            <person name="Parish B.J."/>
            <person name="Parker D.N."/>
            <person name="Parrish J."/>
            <person name="Parks K.L."/>
            <person name="Paul H.A."/>
            <person name="Payton B.A."/>
            <person name="Perez A."/>
            <person name="Perrin W."/>
            <person name="Pickens A."/>
            <person name="Primus E.L."/>
            <person name="Pu L.-L."/>
            <person name="Puazo M."/>
            <person name="Quiles M.M."/>
            <person name="Quiroz J.B."/>
            <person name="Rabata D."/>
            <person name="Reeves K."/>
            <person name="Ruiz S.J."/>
            <person name="Shao H."/>
            <person name="Sisson I."/>
            <person name="Sonaike T."/>
            <person name="Sorelle R.P."/>
            <person name="Sutton A.E."/>
            <person name="Svatek A.F."/>
            <person name="Svetz L.A."/>
            <person name="Tamerisa K.S."/>
            <person name="Taylor T.R."/>
            <person name="Teague B."/>
            <person name="Thomas N."/>
            <person name="Thorn R.D."/>
            <person name="Trejos Z.Y."/>
            <person name="Trevino B.K."/>
            <person name="Ukegbu O.N."/>
            <person name="Urban J.B."/>
            <person name="Vasquez L.I."/>
            <person name="Vera V.A."/>
            <person name="Villasana D.M."/>
            <person name="Wang L."/>
            <person name="Ward-Moore S."/>
            <person name="Warren J.T."/>
            <person name="Wei X."/>
            <person name="White F."/>
            <person name="Williamson A.L."/>
            <person name="Wleczyk R."/>
            <person name="Wooden H.S."/>
            <person name="Wooden S.H."/>
            <person name="Yen J."/>
            <person name="Yoon L."/>
            <person name="Yoon V."/>
            <person name="Zorrilla S.E."/>
            <person name="Nelson D."/>
            <person name="Kucherlapati R."/>
            <person name="Weinstock G."/>
            <person name="Gibbs R.A."/>
        </authorList>
    </citation>
    <scope>NUCLEOTIDE SEQUENCE [LARGE SCALE GENOMIC DNA]</scope>
</reference>
<reference key="5">
    <citation type="journal article" date="2004" name="Genome Res.">
        <title>The status, quality, and expansion of the NIH full-length cDNA project: the Mammalian Gene Collection (MGC).</title>
        <authorList>
            <consortium name="The MGC Project Team"/>
        </authorList>
    </citation>
    <scope>NUCLEOTIDE SEQUENCE [LARGE SCALE MRNA] (ISOFORM BETA)</scope>
    <source>
        <tissue>Eye</tissue>
    </source>
</reference>
<reference key="6">
    <citation type="journal article" date="1995" name="Genomics">
        <title>Structure and mapping of the human thymopoietin (TMPO) gene and relationship of human TMPO beta to rat lamin-associated polypeptide 2.</title>
        <authorList>
            <person name="Harris C.A."/>
            <person name="Andryuk P.J."/>
            <person name="Cline S.W."/>
            <person name="Siekierka J.J."/>
            <person name="Goldstein G."/>
        </authorList>
    </citation>
    <scope>NUCLEOTIDE SEQUENCE [GENOMIC DNA] OF 1-237 AND 313-454 (ISOFORMS BETA AND GAMMA)</scope>
</reference>
<reference key="7">
    <citation type="journal article" date="1998" name="Eur. J. Biochem.">
        <title>Identification of the lamina-associated-polypeptide-2-binding domain of B-type lamin.</title>
        <authorList>
            <person name="Furukawa K."/>
            <person name="Kondo T."/>
        </authorList>
    </citation>
    <scope>INTERACTION WITH LMNB1</scope>
</reference>
<reference key="8">
    <citation type="journal article" date="2003" name="J. Cell Biol.">
        <title>HA95 and LAP2 beta mediate a novel chromatin-nuclear envelope interaction implicated in initiation of DNA replication.</title>
        <authorList>
            <person name="Martins S."/>
            <person name="Eikvar S."/>
            <person name="Furukawa K."/>
            <person name="Collas P."/>
        </authorList>
    </citation>
    <scope>INTERACTION WITH AKAP8L</scope>
</reference>
<reference key="9">
    <citation type="journal article" date="2000" name="J. Struct. Biol.">
        <title>Review: lamina-associated polypeptide 2 isoforms and related proteins in cell cycle-dependent nuclear structure dynamics.</title>
        <authorList>
            <person name="Dechat T."/>
            <person name="Vlcek S."/>
            <person name="Foisner R."/>
        </authorList>
    </citation>
    <scope>TOPOLOGY</scope>
</reference>
<reference key="10">
    <citation type="journal article" date="2006" name="Cell">
        <title>Global, in vivo, and site-specific phosphorylation dynamics in signaling networks.</title>
        <authorList>
            <person name="Olsen J.V."/>
            <person name="Blagoev B."/>
            <person name="Gnad F."/>
            <person name="Macek B."/>
            <person name="Kumar C."/>
            <person name="Mortensen P."/>
            <person name="Mann M."/>
        </authorList>
    </citation>
    <scope>PHOSPHORYLATION [LARGE SCALE ANALYSIS] AT SER-306</scope>
    <scope>IDENTIFICATION BY MASS SPECTROMETRY [LARGE SCALE ANALYSIS]</scope>
    <source>
        <tissue>Cervix carcinoma</tissue>
    </source>
</reference>
<reference key="11">
    <citation type="journal article" date="2007" name="Electrophoresis">
        <title>Toward a global characterization of the phosphoproteome in prostate cancer cells: identification of phosphoproteins in the LNCaP cell line.</title>
        <authorList>
            <person name="Giorgianni F."/>
            <person name="Zhao Y."/>
            <person name="Desiderio D.M."/>
            <person name="Beranova-Giorgianni S."/>
        </authorList>
    </citation>
    <scope>IDENTIFICATION BY MASS SPECTROMETRY [LARGE SCALE ANALYSIS]</scope>
    <source>
        <tissue>Prostate cancer</tissue>
    </source>
</reference>
<reference key="12">
    <citation type="journal article" date="2007" name="J. Proteome Res.">
        <title>Improved titanium dioxide enrichment of phosphopeptides from HeLa cells and high confident phosphopeptide identification by cross-validation of MS/MS and MS/MS/MS spectra.</title>
        <authorList>
            <person name="Yu L.R."/>
            <person name="Zhu Z."/>
            <person name="Chan K.C."/>
            <person name="Issaq H.J."/>
            <person name="Dimitrov D.S."/>
            <person name="Veenstra T.D."/>
        </authorList>
    </citation>
    <scope>PHOSPHORYLATION [LARGE SCALE ANALYSIS] AT SER-306</scope>
    <scope>IDENTIFICATION BY MASS SPECTROMETRY [LARGE SCALE ANALYSIS]</scope>
    <source>
        <tissue>Cervix carcinoma</tissue>
    </source>
</reference>
<reference key="13">
    <citation type="journal article" date="2007" name="Mol. Cell. Proteomics">
        <title>Quantitative phosphoproteome profiling of Wnt3a-mediated signaling network: indicating the involvement of ribonucleoside-diphosphate reductase M2 subunit phosphorylation at residue serine 20 in canonical Wnt signal transduction.</title>
        <authorList>
            <person name="Tang L.-Y."/>
            <person name="Deng N."/>
            <person name="Wang L.-S."/>
            <person name="Dai J."/>
            <person name="Wang Z.-L."/>
            <person name="Jiang X.-S."/>
            <person name="Li S.-J."/>
            <person name="Li L."/>
            <person name="Sheng Q.-H."/>
            <person name="Wu D.-Q."/>
            <person name="Li L."/>
            <person name="Zeng R."/>
        </authorList>
    </citation>
    <scope>PHOSPHORYLATION [LARGE SCALE ANALYSIS] AT SER-306</scope>
    <scope>IDENTIFICATION BY MASS SPECTROMETRY [LARGE SCALE ANALYSIS]</scope>
    <source>
        <tissue>Embryonic kidney</tissue>
    </source>
</reference>
<reference key="14">
    <citation type="journal article" date="2008" name="J. Proteome Res.">
        <title>Combining protein-based IMAC, peptide-based IMAC, and MudPIT for efficient phosphoproteomic analysis.</title>
        <authorList>
            <person name="Cantin G.T."/>
            <person name="Yi W."/>
            <person name="Lu B."/>
            <person name="Park S.K."/>
            <person name="Xu T."/>
            <person name="Lee J.-D."/>
            <person name="Yates J.R. III"/>
        </authorList>
    </citation>
    <scope>PHOSPHORYLATION [LARGE SCALE ANALYSIS] AT THR-74; SER-306 AND SER-315</scope>
    <scope>IDENTIFICATION BY MASS SPECTROMETRY [LARGE SCALE ANALYSIS]</scope>
    <source>
        <tissue>Cervix carcinoma</tissue>
    </source>
</reference>
<reference key="15">
    <citation type="journal article" date="2008" name="J. Proteome Res.">
        <title>Phosphorylation analysis of primary human T lymphocytes using sequential IMAC and titanium oxide enrichment.</title>
        <authorList>
            <person name="Carrascal M."/>
            <person name="Ovelleiro D."/>
            <person name="Casas V."/>
            <person name="Gay M."/>
            <person name="Abian J."/>
        </authorList>
    </citation>
    <scope>IDENTIFICATION BY MASS SPECTROMETRY [LARGE SCALE ANALYSIS]</scope>
    <source>
        <tissue>T-cell</tissue>
    </source>
</reference>
<reference key="16">
    <citation type="journal article" date="2008" name="Mol. Cell">
        <title>Kinase-selective enrichment enables quantitative phosphoproteomics of the kinome across the cell cycle.</title>
        <authorList>
            <person name="Daub H."/>
            <person name="Olsen J.V."/>
            <person name="Bairlein M."/>
            <person name="Gnad F."/>
            <person name="Oppermann F.S."/>
            <person name="Korner R."/>
            <person name="Greff Z."/>
            <person name="Keri G."/>
            <person name="Stemmann O."/>
            <person name="Mann M."/>
        </authorList>
    </citation>
    <scope>PHOSPHORYLATION [LARGE SCALE ANALYSIS] AT THR-74 AND SER-306</scope>
    <scope>IDENTIFICATION BY MASS SPECTROMETRY [LARGE SCALE ANALYSIS]</scope>
    <source>
        <tissue>Cervix carcinoma</tissue>
    </source>
</reference>
<reference key="17">
    <citation type="journal article" date="2008" name="Proc. Natl. Acad. Sci. U.S.A.">
        <title>A quantitative atlas of mitotic phosphorylation.</title>
        <authorList>
            <person name="Dephoure N."/>
            <person name="Zhou C."/>
            <person name="Villen J."/>
            <person name="Beausoleil S.A."/>
            <person name="Bakalarski C.E."/>
            <person name="Elledge S.J."/>
            <person name="Gygi S.P."/>
        </authorList>
    </citation>
    <scope>PHOSPHORYLATION [LARGE SCALE ANALYSIS] AT THR-57; SER-66; SER-67; THR-74; SER-79; THR-160; THR-164; SER-177; SER-180; SER-306; SER-315; SER-362 AND SER-385</scope>
    <scope>IDENTIFICATION BY MASS SPECTROMETRY [LARGE SCALE ANALYSIS]</scope>
    <source>
        <tissue>Cervix carcinoma</tissue>
    </source>
</reference>
<reference key="18">
    <citation type="journal article" date="2008" name="Proteomics">
        <title>Large-scale phosphoproteome analysis of human liver tissue by enrichment and fractionation of phosphopeptides with strong anion exchange chromatography.</title>
        <authorList>
            <person name="Han G."/>
            <person name="Ye M."/>
            <person name="Zhou H."/>
            <person name="Jiang X."/>
            <person name="Feng S."/>
            <person name="Jiang X."/>
            <person name="Tian R."/>
            <person name="Wan D."/>
            <person name="Zou H."/>
            <person name="Gu J."/>
        </authorList>
    </citation>
    <scope>IDENTIFICATION BY MASS SPECTROMETRY [LARGE SCALE ANALYSIS]</scope>
    <source>
        <tissue>Liver</tissue>
    </source>
</reference>
<reference key="19">
    <citation type="journal article" date="2009" name="Anal. Chem.">
        <title>Lys-N and trypsin cover complementary parts of the phosphoproteome in a refined SCX-based approach.</title>
        <authorList>
            <person name="Gauci S."/>
            <person name="Helbig A.O."/>
            <person name="Slijper M."/>
            <person name="Krijgsveld J."/>
            <person name="Heck A.J."/>
            <person name="Mohammed S."/>
        </authorList>
    </citation>
    <scope>IDENTIFICATION BY MASS SPECTROMETRY [LARGE SCALE ANALYSIS]</scope>
</reference>
<reference key="20">
    <citation type="journal article" date="2009" name="Sci. Signal.">
        <title>Quantitative phosphoproteomic analysis of T cell receptor signaling reveals system-wide modulation of protein-protein interactions.</title>
        <authorList>
            <person name="Mayya V."/>
            <person name="Lundgren D.H."/>
            <person name="Hwang S.-I."/>
            <person name="Rezaul K."/>
            <person name="Wu L."/>
            <person name="Eng J.K."/>
            <person name="Rodionov V."/>
            <person name="Han D.K."/>
        </authorList>
    </citation>
    <scope>PHOSPHORYLATION [LARGE SCALE ANALYSIS] AT SER-66; SER-67; THR-74; SER-79; THR-154; THR-160; SER-292 AND SER-306</scope>
    <scope>IDENTIFICATION BY MASS SPECTROMETRY [LARGE SCALE ANALYSIS]</scope>
    <source>
        <tissue>Leukemic T-cell</tissue>
    </source>
</reference>
<reference key="21">
    <citation type="journal article" date="2010" name="Sci. Signal.">
        <title>Quantitative phosphoproteomics reveals widespread full phosphorylation site occupancy during mitosis.</title>
        <authorList>
            <person name="Olsen J.V."/>
            <person name="Vermeulen M."/>
            <person name="Santamaria A."/>
            <person name="Kumar C."/>
            <person name="Miller M.L."/>
            <person name="Jensen L.J."/>
            <person name="Gnad F."/>
            <person name="Cox J."/>
            <person name="Jensen T.S."/>
            <person name="Nigg E.A."/>
            <person name="Brunak S."/>
            <person name="Mann M."/>
        </authorList>
    </citation>
    <scope>PHOSPHORYLATION [LARGE SCALE ANALYSIS] AT THR-74; SER-156; THR-160; THR-211; SER-265; SER-306; THR-312 AND SER-315</scope>
    <scope>IDENTIFICATION BY MASS SPECTROMETRY [LARGE SCALE ANALYSIS]</scope>
    <source>
        <tissue>Cervix carcinoma</tissue>
    </source>
</reference>
<reference key="22">
    <citation type="journal article" date="2011" name="BMC Syst. Biol.">
        <title>Initial characterization of the human central proteome.</title>
        <authorList>
            <person name="Burkard T.R."/>
            <person name="Planyavsky M."/>
            <person name="Kaupe I."/>
            <person name="Breitwieser F.P."/>
            <person name="Buerckstuemmer T."/>
            <person name="Bennett K.L."/>
            <person name="Superti-Furga G."/>
            <person name="Colinge J."/>
        </authorList>
    </citation>
    <scope>IDENTIFICATION BY MASS SPECTROMETRY [LARGE SCALE ANALYSIS]</scope>
</reference>
<reference key="23">
    <citation type="journal article" date="2011" name="Sci. Signal.">
        <title>System-wide temporal characterization of the proteome and phosphoproteome of human embryonic stem cell differentiation.</title>
        <authorList>
            <person name="Rigbolt K.T."/>
            <person name="Prokhorova T.A."/>
            <person name="Akimov V."/>
            <person name="Henningsen J."/>
            <person name="Johansen P.T."/>
            <person name="Kratchmarova I."/>
            <person name="Kassem M."/>
            <person name="Mann M."/>
            <person name="Olsen J.V."/>
            <person name="Blagoev B."/>
        </authorList>
    </citation>
    <scope>PHOSPHORYLATION [LARGE SCALE ANALYSIS] AT SER-59 AND THR-74</scope>
    <scope>IDENTIFICATION BY MASS SPECTROMETRY [LARGE SCALE ANALYSIS]</scope>
</reference>
<reference key="24">
    <citation type="journal article" date="2013" name="J. Proteome Res.">
        <title>Toward a comprehensive characterization of a human cancer cell phosphoproteome.</title>
        <authorList>
            <person name="Zhou H."/>
            <person name="Di Palma S."/>
            <person name="Preisinger C."/>
            <person name="Peng M."/>
            <person name="Polat A.N."/>
            <person name="Heck A.J."/>
            <person name="Mohammed S."/>
        </authorList>
    </citation>
    <scope>PHOSPHORYLATION [LARGE SCALE ANALYSIS] AT SER-66; SER-67; THR-74; SER-79; SER-156; THR-160; THR-164; SER-168; SER-180; SER-184; SER-190; SER-222; SER-224; SER-250; SER-254; SER-265; SER-306; SER-315; SER-378; SER-385 AND SER-402</scope>
    <scope>IDENTIFICATION BY MASS SPECTROMETRY [LARGE SCALE ANALYSIS]</scope>
    <source>
        <tissue>Cervix carcinoma</tissue>
        <tissue>Erythroleukemia</tissue>
    </source>
</reference>
<reference key="25">
    <citation type="journal article" date="2014" name="J. Proteomics">
        <title>An enzyme assisted RP-RPLC approach for in-depth analysis of human liver phosphoproteome.</title>
        <authorList>
            <person name="Bian Y."/>
            <person name="Song C."/>
            <person name="Cheng K."/>
            <person name="Dong M."/>
            <person name="Wang F."/>
            <person name="Huang J."/>
            <person name="Sun D."/>
            <person name="Wang L."/>
            <person name="Ye M."/>
            <person name="Zou H."/>
        </authorList>
    </citation>
    <scope>PHOSPHORYLATION [LARGE SCALE ANALYSIS] AT SER-66; SER-67; THR-74; THR-160 AND SER-306</scope>
    <scope>IDENTIFICATION BY MASS SPECTROMETRY [LARGE SCALE ANALYSIS]</scope>
    <source>
        <tissue>Liver</tissue>
    </source>
</reference>
<reference key="26">
    <citation type="journal article" date="2015" name="Proteomics">
        <title>N-terminome analysis of the human mitochondrial proteome.</title>
        <authorList>
            <person name="Vaca Jacome A.S."/>
            <person name="Rabilloud T."/>
            <person name="Schaeffer-Reiss C."/>
            <person name="Rompais M."/>
            <person name="Ayoub D."/>
            <person name="Lane L."/>
            <person name="Bairoch A."/>
            <person name="Van Dorsselaer A."/>
            <person name="Carapito C."/>
        </authorList>
    </citation>
    <scope>IDENTIFICATION BY MASS SPECTROMETRY [LARGE SCALE ANALYSIS]</scope>
</reference>
<reference key="27">
    <citation type="journal article" date="2017" name="Nat. Struct. Mol. Biol.">
        <title>Site-specific mapping of the human SUMO proteome reveals co-modification with phosphorylation.</title>
        <authorList>
            <person name="Hendriks I.A."/>
            <person name="Lyon D."/>
            <person name="Young C."/>
            <person name="Jensen L.J."/>
            <person name="Vertegaal A.C."/>
            <person name="Nielsen M.L."/>
        </authorList>
    </citation>
    <scope>SUMOYLATION [LARGE SCALE ANALYSIS] AT LYS-401</scope>
    <scope>IDENTIFICATION BY MASS SPECTROMETRY [LARGE SCALE ANALYSIS]</scope>
</reference>
<reference key="28">
    <citation type="journal article" date="2001" name="EMBO J.">
        <title>Solution structure of the constant region of nuclear envelope protein LAP2 reveals two LEM-domain structures: one binds BAF and the other binds DNA.</title>
        <authorList>
            <person name="Cai M."/>
            <person name="Huang Y."/>
            <person name="Ghirlando R."/>
            <person name="Wilson K.L."/>
            <person name="Craigie R."/>
            <person name="Clore G.M."/>
        </authorList>
    </citation>
    <scope>STRUCTURE BY NMR OF 1-169</scope>
</reference>
<reference key="29">
    <citation type="journal article" date="2001" name="Structure">
        <title>Structural characterization of the LEM motif common to three human inner nuclear membrane proteins.</title>
        <authorList>
            <person name="Laguri C."/>
            <person name="Gilquin B."/>
            <person name="Wolff N."/>
            <person name="Romi-Lebrun R."/>
            <person name="Courchay K."/>
            <person name="Callebaut I."/>
            <person name="Worman H.J."/>
            <person name="Zinn-Justin S."/>
        </authorList>
    </citation>
    <scope>STRUCTURE BY NMR OF 1-57 AND 103-159</scope>
</reference>
<gene>
    <name type="primary">TMPO</name>
    <name type="synonym">LAP2</name>
</gene>
<name>LAP2B_HUMAN</name>
<keyword id="KW-0007">Acetylation</keyword>
<keyword id="KW-0025">Alternative splicing</keyword>
<keyword id="KW-0164">Citrullination</keyword>
<keyword id="KW-0963">Cytoplasm</keyword>
<keyword id="KW-0238">DNA-binding</keyword>
<keyword id="KW-1017">Isopeptide bond</keyword>
<keyword id="KW-0472">Membrane</keyword>
<keyword id="KW-0488">Methylation</keyword>
<keyword id="KW-0539">Nucleus</keyword>
<keyword id="KW-0582">Pharmaceutical</keyword>
<keyword id="KW-0597">Phosphoprotein</keyword>
<keyword id="KW-1267">Proteomics identification</keyword>
<keyword id="KW-1185">Reference proteome</keyword>
<keyword id="KW-0735">Signal-anchor</keyword>
<keyword id="KW-0812">Transmembrane</keyword>
<keyword id="KW-1133">Transmembrane helix</keyword>
<keyword id="KW-0832">Ubl conjugation</keyword>
<dbReference type="EMBL" id="U09087">
    <property type="protein sequence ID" value="AAB60330.1"/>
    <property type="molecule type" value="mRNA"/>
</dbReference>
<dbReference type="EMBL" id="U09088">
    <property type="protein sequence ID" value="AAB60331.1"/>
    <property type="molecule type" value="mRNA"/>
</dbReference>
<dbReference type="EMBL" id="EF028063">
    <property type="protein sequence ID" value="ABL61272.1"/>
    <property type="molecule type" value="mRNA"/>
</dbReference>
<dbReference type="EMBL" id="AF070631">
    <property type="protein sequence ID" value="AAC25390.1"/>
    <property type="molecule type" value="mRNA"/>
</dbReference>
<dbReference type="EMBL" id="BC053675">
    <property type="protein sequence ID" value="AAH53675.1"/>
    <property type="molecule type" value="mRNA"/>
</dbReference>
<dbReference type="EMBL" id="U18269">
    <property type="protein sequence ID" value="AAB60434.1"/>
    <property type="molecule type" value="Genomic_DNA"/>
</dbReference>
<dbReference type="EMBL" id="U18266">
    <property type="protein sequence ID" value="AAB60434.1"/>
    <property type="status" value="JOINED"/>
    <property type="molecule type" value="Genomic_DNA"/>
</dbReference>
<dbReference type="EMBL" id="U18267">
    <property type="protein sequence ID" value="AAB60434.1"/>
    <property type="status" value="JOINED"/>
    <property type="molecule type" value="Genomic_DNA"/>
</dbReference>
<dbReference type="EMBL" id="U18268">
    <property type="protein sequence ID" value="AAB60434.1"/>
    <property type="status" value="JOINED"/>
    <property type="molecule type" value="Genomic_DNA"/>
</dbReference>
<dbReference type="EMBL" id="U18270">
    <property type="protein sequence ID" value="AAB60434.1"/>
    <property type="status" value="JOINED"/>
    <property type="molecule type" value="Genomic_DNA"/>
</dbReference>
<dbReference type="EMBL" id="U18271">
    <property type="protein sequence ID" value="AAB60435.1"/>
    <property type="molecule type" value="Genomic_DNA"/>
</dbReference>
<dbReference type="CCDS" id="CCDS31879.1">
    <molecule id="P42167-1"/>
</dbReference>
<dbReference type="CCDS" id="CCDS31880.1">
    <molecule id="P42167-2"/>
</dbReference>
<dbReference type="PIR" id="B55741">
    <property type="entry name" value="B55741"/>
</dbReference>
<dbReference type="PIR" id="C55741">
    <property type="entry name" value="C55741"/>
</dbReference>
<dbReference type="RefSeq" id="NP_001027454.1">
    <molecule id="P42167-1"/>
    <property type="nucleotide sequence ID" value="NM_001032283.3"/>
</dbReference>
<dbReference type="RefSeq" id="NP_001027455.1">
    <molecule id="P42167-2"/>
    <property type="nucleotide sequence ID" value="NM_001032284.3"/>
</dbReference>
<dbReference type="RefSeq" id="NP_001294904.1">
    <property type="nucleotide sequence ID" value="NM_001307975.1"/>
</dbReference>
<dbReference type="BMRB" id="P42167"/>
<dbReference type="SMR" id="P42167"/>
<dbReference type="BioGRID" id="112967">
    <property type="interactions" value="790"/>
</dbReference>
<dbReference type="CORUM" id="P42167"/>
<dbReference type="DIP" id="DIP-43686N"/>
<dbReference type="IntAct" id="P42167">
    <property type="interactions" value="85"/>
</dbReference>
<dbReference type="MINT" id="P42167"/>
<dbReference type="iPTMnet" id="P42167"/>
<dbReference type="MetOSite" id="P42167"/>
<dbReference type="PhosphoSitePlus" id="P42167"/>
<dbReference type="SwissPalm" id="P42167"/>
<dbReference type="BioMuta" id="TMPO"/>
<dbReference type="DMDM" id="1174690"/>
<dbReference type="jPOST" id="P42167"/>
<dbReference type="MassIVE" id="P42167"/>
<dbReference type="ProteomicsDB" id="55489">
    <molecule id="P42167-1"/>
</dbReference>
<dbReference type="ProteomicsDB" id="55490">
    <molecule id="P42167-2"/>
</dbReference>
<dbReference type="Pumba" id="P42167"/>
<dbReference type="TopDownProteomics" id="P42167-1">
    <molecule id="P42167-1"/>
</dbReference>
<dbReference type="TopDownProteomics" id="P42167-2">
    <molecule id="P42167-2"/>
</dbReference>
<dbReference type="Antibodypedia" id="2387">
    <property type="antibodies" value="401 antibodies from 37 providers"/>
</dbReference>
<dbReference type="DNASU" id="7112"/>
<dbReference type="Ensembl" id="ENST00000261210.9">
    <molecule id="P42167-3"/>
    <property type="protein sequence ID" value="ENSP00000261210.5"/>
    <property type="gene ID" value="ENSG00000120802.15"/>
</dbReference>
<dbReference type="Ensembl" id="ENST00000393053.6">
    <molecule id="P42167-2"/>
    <property type="protein sequence ID" value="ENSP00000376773.2"/>
    <property type="gene ID" value="ENSG00000120802.15"/>
</dbReference>
<dbReference type="Ensembl" id="ENST00000556029.6">
    <molecule id="P42167-1"/>
    <property type="protein sequence ID" value="ENSP00000450627.1"/>
    <property type="gene ID" value="ENSG00000120802.15"/>
</dbReference>
<dbReference type="Ensembl" id="ENST00000715724.1">
    <molecule id="P42167-1"/>
    <property type="protein sequence ID" value="ENSP00000520506.1"/>
    <property type="gene ID" value="ENSG00000120802.15"/>
</dbReference>
<dbReference type="GeneID" id="7112"/>
<dbReference type="KEGG" id="hsa:7112"/>
<dbReference type="MANE-Select" id="ENST00000556029.6">
    <property type="protein sequence ID" value="ENSP00000450627.1"/>
    <property type="RefSeq nucleotide sequence ID" value="NM_001032283.3"/>
    <property type="RefSeq protein sequence ID" value="NP_001027454.1"/>
</dbReference>
<dbReference type="UCSC" id="uc001tfi.3">
    <molecule id="P42167-1"/>
    <property type="organism name" value="human"/>
</dbReference>
<dbReference type="AGR" id="HGNC:11875"/>
<dbReference type="CTD" id="7112"/>
<dbReference type="DisGeNET" id="7112"/>
<dbReference type="GeneCards" id="TMPO"/>
<dbReference type="GeneReviews" id="TMPO"/>
<dbReference type="HGNC" id="HGNC:11875">
    <property type="gene designation" value="TMPO"/>
</dbReference>
<dbReference type="HPA" id="ENSG00000120802">
    <property type="expression patterns" value="Tissue enhanced (lymphoid)"/>
</dbReference>
<dbReference type="MalaCards" id="TMPO"/>
<dbReference type="MIM" id="188380">
    <property type="type" value="gene"/>
</dbReference>
<dbReference type="neXtProt" id="NX_P42167"/>
<dbReference type="OpenTargets" id="ENSG00000120802"/>
<dbReference type="Orphanet" id="154">
    <property type="disease" value="Familial isolated dilated cardiomyopathy"/>
</dbReference>
<dbReference type="PharmGKB" id="PA36576"/>
<dbReference type="VEuPathDB" id="HostDB:ENSG00000120802"/>
<dbReference type="GeneTree" id="ENSGT00940000154098"/>
<dbReference type="HOGENOM" id="CLU_097968_0_0_1"/>
<dbReference type="OMA" id="YTESRSI"/>
<dbReference type="OrthoDB" id="10072362at2759"/>
<dbReference type="PathwayCommons" id="P42167"/>
<dbReference type="Reactome" id="R-HSA-2980766">
    <molecule id="P42167-1"/>
    <property type="pathway name" value="Nuclear Envelope Breakdown"/>
</dbReference>
<dbReference type="Reactome" id="R-HSA-2995383">
    <molecule id="P42167-1"/>
    <property type="pathway name" value="Initiation of Nuclear Envelope (NE) Reformation"/>
</dbReference>
<dbReference type="Reactome" id="R-HSA-4419969">
    <molecule id="P42167-1"/>
    <property type="pathway name" value="Depolymerization of the Nuclear Lamina"/>
</dbReference>
<dbReference type="Reactome" id="R-HSA-8980692">
    <property type="pathway name" value="RHOA GTPase cycle"/>
</dbReference>
<dbReference type="Reactome" id="R-HSA-9013106">
    <property type="pathway name" value="RHOC GTPase cycle"/>
</dbReference>
<dbReference type="Reactome" id="R-HSA-9013148">
    <property type="pathway name" value="CDC42 GTPase cycle"/>
</dbReference>
<dbReference type="Reactome" id="R-HSA-9013149">
    <property type="pathway name" value="RAC1 GTPase cycle"/>
</dbReference>
<dbReference type="Reactome" id="R-HSA-9013404">
    <property type="pathway name" value="RAC2 GTPase cycle"/>
</dbReference>
<dbReference type="Reactome" id="R-HSA-9013405">
    <property type="pathway name" value="RHOD GTPase cycle"/>
</dbReference>
<dbReference type="Reactome" id="R-HSA-9013408">
    <property type="pathway name" value="RHOG GTPase cycle"/>
</dbReference>
<dbReference type="Reactome" id="R-HSA-9013409">
    <property type="pathway name" value="RHOJ GTPase cycle"/>
</dbReference>
<dbReference type="Reactome" id="R-HSA-9013423">
    <property type="pathway name" value="RAC3 GTPase cycle"/>
</dbReference>
<dbReference type="Reactome" id="R-HSA-9035034">
    <property type="pathway name" value="RHOF GTPase cycle"/>
</dbReference>
<dbReference type="SignaLink" id="P42167"/>
<dbReference type="BioGRID-ORCS" id="7112">
    <property type="hits" value="21 hits in 1159 CRISPR screens"/>
</dbReference>
<dbReference type="ChiTaRS" id="TMPO">
    <property type="organism name" value="human"/>
</dbReference>
<dbReference type="GenomeRNAi" id="7112"/>
<dbReference type="Pharos" id="P42167">
    <property type="development level" value="Tbio"/>
</dbReference>
<dbReference type="Proteomes" id="UP000005640">
    <property type="component" value="Chromosome 12"/>
</dbReference>
<dbReference type="Bgee" id="ENSG00000120802">
    <property type="expression patterns" value="Expressed in ventricular zone and 200 other cell types or tissues"/>
</dbReference>
<dbReference type="ExpressionAtlas" id="P42167">
    <property type="expression patterns" value="baseline and differential"/>
</dbReference>
<dbReference type="GO" id="GO:0005737">
    <property type="term" value="C:cytoplasm"/>
    <property type="evidence" value="ECO:0007669"/>
    <property type="project" value="UniProtKB-SubCell"/>
</dbReference>
<dbReference type="GO" id="GO:0016020">
    <property type="term" value="C:membrane"/>
    <property type="evidence" value="ECO:0007005"/>
    <property type="project" value="UniProtKB"/>
</dbReference>
<dbReference type="GO" id="GO:0005635">
    <property type="term" value="C:nuclear envelope"/>
    <property type="evidence" value="ECO:0000314"/>
    <property type="project" value="BHF-UCL"/>
</dbReference>
<dbReference type="GO" id="GO:0005637">
    <property type="term" value="C:nuclear inner membrane"/>
    <property type="evidence" value="ECO:0007669"/>
    <property type="project" value="UniProtKB-SubCell"/>
</dbReference>
<dbReference type="GO" id="GO:0031965">
    <property type="term" value="C:nuclear membrane"/>
    <property type="evidence" value="ECO:0000314"/>
    <property type="project" value="HPA"/>
</dbReference>
<dbReference type="GO" id="GO:0005634">
    <property type="term" value="C:nucleus"/>
    <property type="evidence" value="ECO:0000304"/>
    <property type="project" value="ProtInc"/>
</dbReference>
<dbReference type="GO" id="GO:0003677">
    <property type="term" value="F:DNA binding"/>
    <property type="evidence" value="ECO:0007669"/>
    <property type="project" value="UniProtKB-KW"/>
</dbReference>
<dbReference type="GO" id="GO:0005521">
    <property type="term" value="F:lamin binding"/>
    <property type="evidence" value="ECO:0000304"/>
    <property type="project" value="ProtInc"/>
</dbReference>
<dbReference type="CDD" id="cd12940">
    <property type="entry name" value="LEM_LAP2_LEMD1"/>
    <property type="match status" value="1"/>
</dbReference>
<dbReference type="CDD" id="cd12935">
    <property type="entry name" value="LEM_like"/>
    <property type="match status" value="1"/>
</dbReference>
<dbReference type="FunFam" id="1.10.720.40:FF:000002">
    <property type="entry name" value="Thymopoietin isoform alpha"/>
    <property type="match status" value="1"/>
</dbReference>
<dbReference type="FunFam" id="1.10.720.40:FF:000003">
    <property type="entry name" value="thymopoietin isoform X1"/>
    <property type="match status" value="1"/>
</dbReference>
<dbReference type="Gene3D" id="1.10.720.40">
    <property type="match status" value="2"/>
</dbReference>
<dbReference type="InterPro" id="IPR013146">
    <property type="entry name" value="LEM-like_dom"/>
</dbReference>
<dbReference type="InterPro" id="IPR011015">
    <property type="entry name" value="LEM/LEM-like_dom_sf"/>
</dbReference>
<dbReference type="InterPro" id="IPR003887">
    <property type="entry name" value="LEM_dom"/>
</dbReference>
<dbReference type="InterPro" id="IPR051656">
    <property type="entry name" value="LEM_domain"/>
</dbReference>
<dbReference type="PANTHER" id="PTHR12019:SF23">
    <property type="entry name" value="LAMINA-ASSOCIATED POLYPEPTIDE 2, ISOFORM BETA"/>
    <property type="match status" value="1"/>
</dbReference>
<dbReference type="PANTHER" id="PTHR12019">
    <property type="entry name" value="LAMINA-ASSOCIATED POLYPEPTIDE THYMOPOIETIN"/>
    <property type="match status" value="1"/>
</dbReference>
<dbReference type="Pfam" id="PF03020">
    <property type="entry name" value="LEM"/>
    <property type="match status" value="1"/>
</dbReference>
<dbReference type="Pfam" id="PF08198">
    <property type="entry name" value="Thymopoietin"/>
    <property type="match status" value="1"/>
</dbReference>
<dbReference type="SMART" id="SM00540">
    <property type="entry name" value="LEM"/>
    <property type="match status" value="1"/>
</dbReference>
<dbReference type="SMART" id="SM01261">
    <property type="entry name" value="Thymopoietin"/>
    <property type="match status" value="1"/>
</dbReference>
<dbReference type="SUPFAM" id="SSF63451">
    <property type="entry name" value="LEM domain"/>
    <property type="match status" value="2"/>
</dbReference>
<dbReference type="PROSITE" id="PS50954">
    <property type="entry name" value="LEM"/>
    <property type="match status" value="1"/>
</dbReference>
<dbReference type="PROSITE" id="PS50955">
    <property type="entry name" value="LEM_LIKE"/>
    <property type="match status" value="1"/>
</dbReference>
<comment type="function">
    <text>May help direct the assembly of the nuclear lamina and thereby help maintain the structural organization of the nuclear envelope. Possible receptor for attachment of lamin filaments to the inner nuclear membrane. May be involved in the control of initiation of DNA replication through its interaction with NAKAP95.</text>
</comment>
<comment type="function">
    <text>Thymopoietin (TP) and Thymopentin (TP5) may play a role in T-cell development and function. TP5 is an immunomodulating pentapeptide.</text>
</comment>
<comment type="subunit">
    <text evidence="1 7 9">Interacts with LMNB1, LMNB2, BANF1, AKAP8L, GMCL and chromosomes (By similarity). Isoform Zeta interacts with BANF1/BAF and may sequester it in the cytoplasm.</text>
</comment>
<comment type="interaction">
    <interactant intactId="EBI-455283">
        <id>P42167</id>
    </interactant>
    <interactant intactId="EBI-712073">
        <id>Q8NBJ4</id>
        <label>GOLM1</label>
    </interactant>
    <organismsDiffer>false</organismsDiffer>
    <experiments>3</experiments>
</comment>
<comment type="interaction">
    <interactant intactId="EBI-455283">
        <id>P42167</id>
    </interactant>
    <interactant intactId="EBI-6426464">
        <id>Q8WZ60</id>
        <label>KLHL6</label>
    </interactant>
    <organismsDiffer>false</organismsDiffer>
    <experiments>3</experiments>
</comment>
<comment type="interaction">
    <interactant intactId="EBI-455283">
        <id>P42167</id>
    </interactant>
    <interactant intactId="EBI-389883">
        <id>P16333</id>
        <label>NCK1</label>
    </interactant>
    <organismsDiffer>false</organismsDiffer>
    <experiments>2</experiments>
</comment>
<comment type="interaction">
    <interactant intactId="EBI-455283">
        <id>P42167</id>
    </interactant>
    <interactant intactId="EBI-1211440">
        <id>P27105</id>
        <label>STOM</label>
    </interactant>
    <organismsDiffer>false</organismsDiffer>
    <experiments>3</experiments>
</comment>
<comment type="subcellular location">
    <subcellularLocation>
        <location>Nucleus inner membrane</location>
        <topology>Single-pass type II membrane protein</topology>
    </subcellularLocation>
    <text>Tightly associated with the nuclear lamina.</text>
</comment>
<comment type="subcellular location">
    <molecule>Isoform Zeta</molecule>
    <subcellularLocation>
        <location evidence="8">Cytoplasm</location>
    </subcellularLocation>
</comment>
<comment type="alternative products">
    <event type="alternative splicing"/>
    <isoform>
        <id>P42167-1</id>
        <name>Beta</name>
        <sequence type="displayed"/>
    </isoform>
    <isoform>
        <id>P42166-1</id>
        <name>Alpha</name>
        <sequence type="external"/>
    </isoform>
    <isoform>
        <id>P42167-2</id>
        <name>Gamma</name>
        <sequence type="described" ref="VSP_004456"/>
    </isoform>
    <isoform>
        <id>P42167-3</id>
        <name>Zeta</name>
        <sequence type="described" ref="VSP_056162 VSP_056163"/>
    </isoform>
    <text>Additional isoforms seem to exist.</text>
</comment>
<comment type="tissue specificity">
    <text>Expressed in many tissues. Most abundant in adult thymus and fetal liver.</text>
</comment>
<comment type="domain">
    <text>Has two structurally independent, non-interacting domains: LEM-like (also called LAP2-N or LEM-D) and LEM (also called LAP2-C or LEM-B). LEM-like binds DNA while LEM interacts with BANF1.</text>
</comment>
<comment type="PTM">
    <text evidence="1">Mitosis-specific phosphorylation specifically abolishes its binding to lamin B and chromosomes.</text>
</comment>
<comment type="PTM">
    <text evidence="1">Citrullinated by PADI4.</text>
</comment>
<comment type="pharmaceutical">
    <text>TP5 is available under the names Timunox (Cilag), Sintomodulina (Italofarmaco) and Mepentil (Recordati). Used in primary and secondary immune deficiencies, autoimmunity, infections and cancer.</text>
</comment>
<comment type="miscellaneous">
    <molecule>Isoform Zeta</molecule>
    <text evidence="13">Inhibits LAP2beta-mediated repression.</text>
</comment>
<comment type="similarity">
    <text evidence="13">Belongs to the LEM family.</text>
</comment>
<evidence type="ECO:0000250" key="1"/>
<evidence type="ECO:0000250" key="2">
    <source>
        <dbReference type="UniProtKB" id="Q61029"/>
    </source>
</evidence>
<evidence type="ECO:0000255" key="3"/>
<evidence type="ECO:0000255" key="4">
    <source>
        <dbReference type="PROSITE-ProRule" id="PRU00313"/>
    </source>
</evidence>
<evidence type="ECO:0000255" key="5">
    <source>
        <dbReference type="PROSITE-ProRule" id="PRU00314"/>
    </source>
</evidence>
<evidence type="ECO:0000256" key="6">
    <source>
        <dbReference type="SAM" id="MobiDB-lite"/>
    </source>
</evidence>
<evidence type="ECO:0000269" key="7">
    <source>
    </source>
</evidence>
<evidence type="ECO:0000269" key="8">
    <source>
    </source>
</evidence>
<evidence type="ECO:0000269" key="9">
    <source>
    </source>
</evidence>
<evidence type="ECO:0000303" key="10">
    <source>
    </source>
</evidence>
<evidence type="ECO:0000303" key="11">
    <source>
    </source>
</evidence>
<evidence type="ECO:0000303" key="12">
    <source ref="3"/>
</evidence>
<evidence type="ECO:0000305" key="13"/>
<evidence type="ECO:0007744" key="14">
    <source>
    </source>
</evidence>
<evidence type="ECO:0007744" key="15">
    <source>
    </source>
</evidence>
<evidence type="ECO:0007744" key="16">
    <source>
    </source>
</evidence>
<evidence type="ECO:0007744" key="17">
    <source>
    </source>
</evidence>
<evidence type="ECO:0007744" key="18">
    <source>
    </source>
</evidence>
<evidence type="ECO:0007744" key="19">
    <source>
    </source>
</evidence>
<evidence type="ECO:0007744" key="20">
    <source>
    </source>
</evidence>
<evidence type="ECO:0007744" key="21">
    <source>
    </source>
</evidence>
<evidence type="ECO:0007744" key="22">
    <source>
    </source>
</evidence>
<evidence type="ECO:0007744" key="23">
    <source>
    </source>
</evidence>
<evidence type="ECO:0007744" key="24">
    <source>
    </source>
</evidence>
<evidence type="ECO:0007744" key="25">
    <source>
    </source>
</evidence>
<protein>
    <recommendedName>
        <fullName>Lamina-associated polypeptide 2, isoforms beta/gamma</fullName>
    </recommendedName>
    <alternativeName>
        <fullName>Thymopoietin, isoforms beta/gamma</fullName>
        <shortName>TP beta/gamma</shortName>
    </alternativeName>
    <alternativeName>
        <fullName>Thymopoietin-related peptide isoforms beta/gamma</fullName>
        <shortName>TPRP isoforms beta/gamma</shortName>
    </alternativeName>
    <component>
        <recommendedName>
            <fullName>Thymopoietin</fullName>
            <shortName>TP</shortName>
        </recommendedName>
        <alternativeName>
            <fullName>Splenin</fullName>
        </alternativeName>
    </component>
    <component>
        <recommendedName>
            <fullName>Thymopentin</fullName>
        </recommendedName>
        <alternativeName>
            <fullName>TP5</fullName>
        </alternativeName>
    </component>
</protein>
<proteinExistence type="evidence at protein level"/>
<organism>
    <name type="scientific">Homo sapiens</name>
    <name type="common">Human</name>
    <dbReference type="NCBI Taxonomy" id="9606"/>
    <lineage>
        <taxon>Eukaryota</taxon>
        <taxon>Metazoa</taxon>
        <taxon>Chordata</taxon>
        <taxon>Craniata</taxon>
        <taxon>Vertebrata</taxon>
        <taxon>Euteleostomi</taxon>
        <taxon>Mammalia</taxon>
        <taxon>Eutheria</taxon>
        <taxon>Euarchontoglires</taxon>
        <taxon>Primates</taxon>
        <taxon>Haplorrhini</taxon>
        <taxon>Catarrhini</taxon>
        <taxon>Hominidae</taxon>
        <taxon>Homo</taxon>
    </lineage>
</organism>
<sequence>MPEFLEDPSVLTKDKLKSELVANNVTLPAGEQRKDVYVQLYLQHLTARNRPPLPAGTNSKGPPDFSSDEEREPTPVLGSGAAAAGRSRAAVGRKATKKTDKPRQEDKDDLDVTELTNEDLLDQLVKYGVNPGPIVGTTRKLYEKKLLKLREQGTESRSSTPLPTISSSAENTRQNGSNDSDRYSDNEEDSKIELKLEKREPLKGRAKTPVTLKQRRVEHNQSYSQAGITETEWTSGSSKGGPLQALTRESTRGSRRTPRKRVETSEHFRIDGPVISESTPIAETIMASSNESLVVNRVTGNFKHASPILPITEFSDIPRRAPKKPLTRAEVGEKTEERRVERDILKEMFPYEASTPTGISASCRRPIKGAAGRPLELSDFRMEESFSSKYVPKYVPLADVKSEKTKKGRSIPVWIKILLFVVVAVFLFLVYQAMETNQVNPFSNFLHVDPRKSN</sequence>
<feature type="chain" id="PRO_0000045841" description="Lamina-associated polypeptide 2, isoforms beta/gamma">
    <location>
        <begin position="1"/>
        <end position="454"/>
    </location>
</feature>
<feature type="peptide" id="PRO_0000017677" description="Thymopoietin">
    <location>
        <begin position="1"/>
        <end position="50"/>
    </location>
</feature>
<feature type="peptide" id="PRO_0000017678" description="Thymopentin">
    <location>
        <begin position="33"/>
        <end position="37"/>
    </location>
</feature>
<feature type="transmembrane region" description="Helical; Signal-anchor for type II membrane protein" evidence="3">
    <location>
        <begin position="411"/>
        <end position="434"/>
    </location>
</feature>
<feature type="topological domain" description="Lumenal" evidence="3">
    <location>
        <begin position="435"/>
        <end position="454"/>
    </location>
</feature>
<feature type="domain" description="LEM-like" evidence="4 5">
    <location>
        <begin position="5"/>
        <end position="48"/>
    </location>
</feature>
<feature type="domain" description="LEM" evidence="4">
    <location>
        <begin position="109"/>
        <end position="153"/>
    </location>
</feature>
<feature type="region of interest" description="Nucleoplasmic" evidence="3">
    <location>
        <begin position="1"/>
        <end position="410"/>
    </location>
</feature>
<feature type="region of interest" description="Disordered" evidence="6">
    <location>
        <begin position="47"/>
        <end position="117"/>
    </location>
</feature>
<feature type="region of interest" description="Linker">
    <location>
        <begin position="49"/>
        <end position="108"/>
    </location>
</feature>
<feature type="region of interest" description="NAKAP95-binding N">
    <location>
        <begin position="138"/>
        <end position="243"/>
    </location>
</feature>
<feature type="region of interest" description="Disordered" evidence="6">
    <location>
        <begin position="149"/>
        <end position="265"/>
    </location>
</feature>
<feature type="region of interest" description="Binds lamins B">
    <location>
        <begin position="299"/>
        <end position="371"/>
    </location>
</feature>
<feature type="region of interest" description="NAKAP95-binding C">
    <location>
        <begin position="300"/>
        <end position="374"/>
    </location>
</feature>
<feature type="compositionally biased region" description="Low complexity" evidence="6">
    <location>
        <begin position="78"/>
        <end position="93"/>
    </location>
</feature>
<feature type="compositionally biased region" description="Basic and acidic residues" evidence="6">
    <location>
        <begin position="97"/>
        <end position="106"/>
    </location>
</feature>
<feature type="compositionally biased region" description="Acidic residues" evidence="6">
    <location>
        <begin position="107"/>
        <end position="117"/>
    </location>
</feature>
<feature type="compositionally biased region" description="Polar residues" evidence="6">
    <location>
        <begin position="155"/>
        <end position="178"/>
    </location>
</feature>
<feature type="compositionally biased region" description="Basic and acidic residues" evidence="6">
    <location>
        <begin position="179"/>
        <end position="203"/>
    </location>
</feature>
<feature type="compositionally biased region" description="Polar residues" evidence="6">
    <location>
        <begin position="220"/>
        <end position="237"/>
    </location>
</feature>
<feature type="modified residue" description="Phosphothreonine" evidence="18">
    <location>
        <position position="57"/>
    </location>
</feature>
<feature type="modified residue" description="Phosphoserine" evidence="22">
    <location>
        <position position="59"/>
    </location>
</feature>
<feature type="modified residue" description="Phosphoserine" evidence="18 20 23 24">
    <location>
        <position position="66"/>
    </location>
</feature>
<feature type="modified residue" description="Phosphoserine" evidence="18 20 23 24">
    <location>
        <position position="67"/>
    </location>
</feature>
<feature type="modified residue" description="Phosphothreonine" evidence="17 18 19 20 21 22 23 24">
    <location>
        <position position="74"/>
    </location>
</feature>
<feature type="modified residue" description="Phosphoserine" evidence="18 20 23">
    <location>
        <position position="79"/>
    </location>
</feature>
<feature type="modified residue" description="Omega-N-methylarginine" evidence="2">
    <location>
        <position position="86"/>
    </location>
</feature>
<feature type="modified residue" description="Omega-N-methylarginine" evidence="2">
    <location>
        <position position="88"/>
    </location>
</feature>
<feature type="modified residue" description="Phosphothreonine" evidence="20">
    <location>
        <position position="154"/>
    </location>
</feature>
<feature type="modified residue" description="Phosphoserine" evidence="21 23">
    <location>
        <position position="156"/>
    </location>
</feature>
<feature type="modified residue" description="Phosphoserine" evidence="2">
    <location>
        <position position="159"/>
    </location>
</feature>
<feature type="modified residue" description="Phosphothreonine" evidence="18 20 21 23 24">
    <location>
        <position position="160"/>
    </location>
</feature>
<feature type="modified residue" description="Phosphothreonine" evidence="18 23">
    <location>
        <position position="164"/>
    </location>
</feature>
<feature type="modified residue" description="Phosphoserine" evidence="2">
    <location>
        <position position="166"/>
    </location>
</feature>
<feature type="modified residue" description="Phosphoserine" evidence="23">
    <location>
        <position position="168"/>
    </location>
</feature>
<feature type="modified residue" description="Phosphoserine" evidence="18">
    <location>
        <position position="177"/>
    </location>
</feature>
<feature type="modified residue" description="Phosphoserine" evidence="18 23">
    <location>
        <position position="180"/>
    </location>
</feature>
<feature type="modified residue" description="Phosphoserine" evidence="23">
    <location>
        <position position="184"/>
    </location>
</feature>
<feature type="modified residue" description="Phosphoserine" evidence="23">
    <location>
        <position position="190"/>
    </location>
</feature>
<feature type="modified residue" description="N6-acetyllysine" evidence="2">
    <location>
        <position position="207"/>
    </location>
</feature>
<feature type="modified residue" description="Phosphothreonine" evidence="21">
    <location>
        <position position="211"/>
    </location>
</feature>
<feature type="modified residue" description="Phosphoserine" evidence="23">
    <location>
        <position position="222"/>
    </location>
</feature>
<feature type="modified residue" description="Phosphoserine" evidence="23">
    <location>
        <position position="224"/>
    </location>
</feature>
<feature type="modified residue" description="Phosphoserine" evidence="23">
    <location>
        <position position="250"/>
    </location>
</feature>
<feature type="modified residue" description="Phosphoserine" evidence="23">
    <location>
        <position position="254"/>
    </location>
</feature>
<feature type="modified residue" description="Phosphoserine" evidence="21 23">
    <location>
        <position position="265"/>
    </location>
</feature>
<feature type="modified residue" description="Phosphoserine" evidence="20">
    <location>
        <position position="292"/>
    </location>
</feature>
<feature type="modified residue" description="Phosphoserine" evidence="14 15 16 17 18 19 20 21 23 24">
    <location>
        <position position="306"/>
    </location>
</feature>
<feature type="modified residue" description="Phosphothreonine" evidence="21">
    <location>
        <position position="312"/>
    </location>
</feature>
<feature type="modified residue" description="Phosphoserine" evidence="17 18 21 23">
    <location>
        <position position="315"/>
    </location>
</feature>
<feature type="modified residue" description="Citrulline" evidence="1">
    <location>
        <position position="320"/>
    </location>
</feature>
<feature type="modified residue" description="Phosphoserine" evidence="18">
    <location>
        <position position="362"/>
    </location>
</feature>
<feature type="modified residue" description="Phosphoserine" evidence="23">
    <location>
        <position position="378"/>
    </location>
</feature>
<feature type="modified residue" description="Phosphoserine" evidence="18 23">
    <location>
        <position position="385"/>
    </location>
</feature>
<feature type="modified residue" description="N6-acetyllysine" evidence="2">
    <location>
        <position position="389"/>
    </location>
</feature>
<feature type="modified residue" description="Phosphoserine" evidence="23">
    <location>
        <position position="402"/>
    </location>
</feature>
<feature type="cross-link" description="Glycyl lysine isopeptide (Lys-Gly) (interchain with G-Cter in SUMO2)" evidence="25">
    <location>
        <position position="401"/>
    </location>
</feature>
<feature type="splice variant" id="VSP_004456" description="In isoform Gamma." evidence="11 12">
    <location>
        <begin position="222"/>
        <end position="330"/>
    </location>
</feature>
<feature type="splice variant" id="VSP_056162" description="In isoform Zeta." evidence="10">
    <original>SYSQAGITETEWTSGSSKGGPLQALTR</original>
    <variation>VSLVLLPPCTGINNLLTTLIHVLAFNG</variation>
    <location>
        <begin position="222"/>
        <end position="248"/>
    </location>
</feature>
<feature type="splice variant" id="VSP_056163" description="In isoform Zeta." evidence="10">
    <location>
        <begin position="249"/>
        <end position="454"/>
    </location>
</feature>
<feature type="sequence variant" id="VAR_049779" description="In dbSNP:rs7133258.">
    <original>A</original>
    <variation>P</variation>
    <location>
        <position position="287"/>
    </location>
</feature>
<feature type="sequence variant" id="VAR_014786" description="In dbSNP:rs1058288.">
    <original>L</original>
    <variation>F</variation>
    <location>
        <position position="427"/>
    </location>
</feature>